<feature type="chain" id="PRO_1000137597" description="Protein GrpE">
    <location>
        <begin position="1"/>
        <end position="247"/>
    </location>
</feature>
<feature type="region of interest" description="Disordered" evidence="2">
    <location>
        <begin position="1"/>
        <end position="64"/>
    </location>
</feature>
<feature type="region of interest" description="Disordered" evidence="2">
    <location>
        <begin position="214"/>
        <end position="247"/>
    </location>
</feature>
<feature type="compositionally biased region" description="Polar residues" evidence="2">
    <location>
        <begin position="30"/>
        <end position="39"/>
    </location>
</feature>
<feature type="compositionally biased region" description="Polar residues" evidence="2">
    <location>
        <begin position="49"/>
        <end position="63"/>
    </location>
</feature>
<feature type="compositionally biased region" description="Polar residues" evidence="2">
    <location>
        <begin position="228"/>
        <end position="241"/>
    </location>
</feature>
<reference key="1">
    <citation type="journal article" date="2007" name="PLoS Genet.">
        <title>Patterns and implications of gene gain and loss in the evolution of Prochlorococcus.</title>
        <authorList>
            <person name="Kettler G.C."/>
            <person name="Martiny A.C."/>
            <person name="Huang K."/>
            <person name="Zucker J."/>
            <person name="Coleman M.L."/>
            <person name="Rodrigue S."/>
            <person name="Chen F."/>
            <person name="Lapidus A."/>
            <person name="Ferriera S."/>
            <person name="Johnson J."/>
            <person name="Steglich C."/>
            <person name="Church G.M."/>
            <person name="Richardson P."/>
            <person name="Chisholm S.W."/>
        </authorList>
    </citation>
    <scope>NUCLEOTIDE SEQUENCE [LARGE SCALE GENOMIC DNA]</scope>
    <source>
        <strain>MIT 9211</strain>
    </source>
</reference>
<accession>A9B9L4</accession>
<evidence type="ECO:0000255" key="1">
    <source>
        <dbReference type="HAMAP-Rule" id="MF_01151"/>
    </source>
</evidence>
<evidence type="ECO:0000256" key="2">
    <source>
        <dbReference type="SAM" id="MobiDB-lite"/>
    </source>
</evidence>
<sequence>MNDEASTPIQEDLKEESAVDLAQEAKPTSDEPSLSNVAEGSQEAGAETDVTSSDAKDSSSQALDNEARLEQLEREHETLNSQYMRIAADFDNFRKRQSRDQDDLRLQLQCNTLSSILPVVDNFDRARQQLNPEGEEAQALHKSYQGLYKQLVDVLKQLGVAPMRVVGQTFDPSLHEAVLREPSDELAEDIIVEELQRGYHLNGRVLRHALVKVSMGPGPKDDGEETITEQSLEGDNTTDQQSSEKSD</sequence>
<organism>
    <name type="scientific">Prochlorococcus marinus (strain MIT 9211)</name>
    <dbReference type="NCBI Taxonomy" id="93059"/>
    <lineage>
        <taxon>Bacteria</taxon>
        <taxon>Bacillati</taxon>
        <taxon>Cyanobacteriota</taxon>
        <taxon>Cyanophyceae</taxon>
        <taxon>Synechococcales</taxon>
        <taxon>Prochlorococcaceae</taxon>
        <taxon>Prochlorococcus</taxon>
    </lineage>
</organism>
<name>GRPE_PROM4</name>
<proteinExistence type="inferred from homology"/>
<dbReference type="EMBL" id="CP000878">
    <property type="protein sequence ID" value="ABX07947.1"/>
    <property type="molecule type" value="Genomic_DNA"/>
</dbReference>
<dbReference type="RefSeq" id="WP_012194572.1">
    <property type="nucleotide sequence ID" value="NC_009976.1"/>
</dbReference>
<dbReference type="SMR" id="A9B9L4"/>
<dbReference type="STRING" id="93059.P9211_00161"/>
<dbReference type="KEGG" id="pmj:P9211_00161"/>
<dbReference type="eggNOG" id="COG0576">
    <property type="taxonomic scope" value="Bacteria"/>
</dbReference>
<dbReference type="HOGENOM" id="CLU_057217_5_1_3"/>
<dbReference type="OrthoDB" id="9812586at2"/>
<dbReference type="Proteomes" id="UP000000788">
    <property type="component" value="Chromosome"/>
</dbReference>
<dbReference type="GO" id="GO:0005737">
    <property type="term" value="C:cytoplasm"/>
    <property type="evidence" value="ECO:0007669"/>
    <property type="project" value="UniProtKB-SubCell"/>
</dbReference>
<dbReference type="GO" id="GO:0000774">
    <property type="term" value="F:adenyl-nucleotide exchange factor activity"/>
    <property type="evidence" value="ECO:0007669"/>
    <property type="project" value="InterPro"/>
</dbReference>
<dbReference type="GO" id="GO:0042803">
    <property type="term" value="F:protein homodimerization activity"/>
    <property type="evidence" value="ECO:0007669"/>
    <property type="project" value="InterPro"/>
</dbReference>
<dbReference type="GO" id="GO:0051087">
    <property type="term" value="F:protein-folding chaperone binding"/>
    <property type="evidence" value="ECO:0007669"/>
    <property type="project" value="InterPro"/>
</dbReference>
<dbReference type="GO" id="GO:0051082">
    <property type="term" value="F:unfolded protein binding"/>
    <property type="evidence" value="ECO:0007669"/>
    <property type="project" value="TreeGrafter"/>
</dbReference>
<dbReference type="GO" id="GO:0006457">
    <property type="term" value="P:protein folding"/>
    <property type="evidence" value="ECO:0007669"/>
    <property type="project" value="InterPro"/>
</dbReference>
<dbReference type="CDD" id="cd00446">
    <property type="entry name" value="GrpE"/>
    <property type="match status" value="1"/>
</dbReference>
<dbReference type="FunFam" id="2.30.22.10:FF:000001">
    <property type="entry name" value="Protein GrpE"/>
    <property type="match status" value="1"/>
</dbReference>
<dbReference type="Gene3D" id="3.90.20.20">
    <property type="match status" value="1"/>
</dbReference>
<dbReference type="Gene3D" id="2.30.22.10">
    <property type="entry name" value="Head domain of nucleotide exchange factor GrpE"/>
    <property type="match status" value="1"/>
</dbReference>
<dbReference type="HAMAP" id="MF_01151">
    <property type="entry name" value="GrpE"/>
    <property type="match status" value="1"/>
</dbReference>
<dbReference type="InterPro" id="IPR000740">
    <property type="entry name" value="GrpE"/>
</dbReference>
<dbReference type="InterPro" id="IPR013805">
    <property type="entry name" value="GrpE_coiled_coil"/>
</dbReference>
<dbReference type="InterPro" id="IPR009012">
    <property type="entry name" value="GrpE_head"/>
</dbReference>
<dbReference type="NCBIfam" id="NF010741">
    <property type="entry name" value="PRK14143.1"/>
    <property type="match status" value="1"/>
</dbReference>
<dbReference type="PANTHER" id="PTHR21237">
    <property type="entry name" value="GRPE PROTEIN"/>
    <property type="match status" value="1"/>
</dbReference>
<dbReference type="PANTHER" id="PTHR21237:SF23">
    <property type="entry name" value="GRPE PROTEIN HOMOLOG, MITOCHONDRIAL"/>
    <property type="match status" value="1"/>
</dbReference>
<dbReference type="Pfam" id="PF01025">
    <property type="entry name" value="GrpE"/>
    <property type="match status" value="1"/>
</dbReference>
<dbReference type="PRINTS" id="PR00773">
    <property type="entry name" value="GRPEPROTEIN"/>
</dbReference>
<dbReference type="SUPFAM" id="SSF58014">
    <property type="entry name" value="Coiled-coil domain of nucleotide exchange factor GrpE"/>
    <property type="match status" value="1"/>
</dbReference>
<dbReference type="SUPFAM" id="SSF51064">
    <property type="entry name" value="Head domain of nucleotide exchange factor GrpE"/>
    <property type="match status" value="1"/>
</dbReference>
<dbReference type="PROSITE" id="PS01071">
    <property type="entry name" value="GRPE"/>
    <property type="match status" value="1"/>
</dbReference>
<protein>
    <recommendedName>
        <fullName evidence="1">Protein GrpE</fullName>
    </recommendedName>
    <alternativeName>
        <fullName evidence="1">HSP-70 cofactor</fullName>
    </alternativeName>
</protein>
<gene>
    <name evidence="1" type="primary">grpE</name>
    <name type="ordered locus">P9211_00161</name>
</gene>
<comment type="function">
    <text evidence="1">Participates actively in the response to hyperosmotic and heat shock by preventing the aggregation of stress-denatured proteins, in association with DnaK and GrpE. It is the nucleotide exchange factor for DnaK and may function as a thermosensor. Unfolded proteins bind initially to DnaJ; upon interaction with the DnaJ-bound protein, DnaK hydrolyzes its bound ATP, resulting in the formation of a stable complex. GrpE releases ADP from DnaK; ATP binding to DnaK triggers the release of the substrate protein, thus completing the reaction cycle. Several rounds of ATP-dependent interactions between DnaJ, DnaK and GrpE are required for fully efficient folding.</text>
</comment>
<comment type="subunit">
    <text evidence="1">Homodimer.</text>
</comment>
<comment type="subcellular location">
    <subcellularLocation>
        <location evidence="1">Cytoplasm</location>
    </subcellularLocation>
</comment>
<comment type="similarity">
    <text evidence="1">Belongs to the GrpE family.</text>
</comment>
<keyword id="KW-0143">Chaperone</keyword>
<keyword id="KW-0963">Cytoplasm</keyword>
<keyword id="KW-1185">Reference proteome</keyword>
<keyword id="KW-0346">Stress response</keyword>